<protein>
    <recommendedName>
        <fullName evidence="1">tRNA pseudouridine synthase B</fullName>
        <ecNumber evidence="1">5.4.99.25</ecNumber>
    </recommendedName>
    <alternativeName>
        <fullName evidence="1">tRNA pseudouridine(55) synthase</fullName>
        <shortName evidence="1">Psi55 synthase</shortName>
    </alternativeName>
    <alternativeName>
        <fullName evidence="1">tRNA pseudouridylate synthase</fullName>
    </alternativeName>
    <alternativeName>
        <fullName evidence="1">tRNA-uridine isomerase</fullName>
    </alternativeName>
</protein>
<accession>A7MQD9</accession>
<sequence>MSRPRRRGRDVHGVLLLDKPQGLSSNDALQKVKRIYNANRAGHTGALDPLATGMLPICLGEATKFSQYLLDSDKRYRVIARLGQRTDTSDADGTVVEERPVTFSEQQLQDALESFRGDTLQVPTMFSALKYQGKPLYEYARQGIEVPREARPITVYELLFIRHEGDELELEVHCSKGTYIRTIIDDLGEKLGCGAHVIYLRRLTVSKYPVERMVTLEQLNALLEEAQTRDIAPSELLDPLLMPMDSPAADYPVVNLPLTSSVYFKNGNPVRTTGAPSEGLVRVTEGEAQKFLGMGEIDSEGRVAPRRLVVEYPV</sequence>
<evidence type="ECO:0000255" key="1">
    <source>
        <dbReference type="HAMAP-Rule" id="MF_01080"/>
    </source>
</evidence>
<proteinExistence type="inferred from homology"/>
<organism>
    <name type="scientific">Cronobacter sakazakii (strain ATCC BAA-894)</name>
    <name type="common">Enterobacter sakazakii</name>
    <dbReference type="NCBI Taxonomy" id="290339"/>
    <lineage>
        <taxon>Bacteria</taxon>
        <taxon>Pseudomonadati</taxon>
        <taxon>Pseudomonadota</taxon>
        <taxon>Gammaproteobacteria</taxon>
        <taxon>Enterobacterales</taxon>
        <taxon>Enterobacteriaceae</taxon>
        <taxon>Cronobacter</taxon>
    </lineage>
</organism>
<name>TRUB_CROS8</name>
<gene>
    <name evidence="1" type="primary">truB</name>
    <name type="ordered locus">ESA_03559</name>
</gene>
<feature type="chain" id="PRO_1000084591" description="tRNA pseudouridine synthase B">
    <location>
        <begin position="1"/>
        <end position="314"/>
    </location>
</feature>
<feature type="active site" description="Nucleophile" evidence="1">
    <location>
        <position position="48"/>
    </location>
</feature>
<feature type="binding site" evidence="1">
    <location>
        <position position="43"/>
    </location>
    <ligand>
        <name>substrate</name>
    </ligand>
</feature>
<feature type="binding site" evidence="1">
    <location>
        <position position="76"/>
    </location>
    <ligand>
        <name>substrate</name>
    </ligand>
</feature>
<feature type="binding site" evidence="1">
    <location>
        <position position="179"/>
    </location>
    <ligand>
        <name>substrate</name>
    </ligand>
</feature>
<feature type="binding site" evidence="1">
    <location>
        <position position="200"/>
    </location>
    <ligand>
        <name>substrate</name>
    </ligand>
</feature>
<keyword id="KW-0413">Isomerase</keyword>
<keyword id="KW-1185">Reference proteome</keyword>
<keyword id="KW-0819">tRNA processing</keyword>
<reference key="1">
    <citation type="journal article" date="2010" name="PLoS ONE">
        <title>Genome sequence of Cronobacter sakazakii BAA-894 and comparative genomic hybridization analysis with other Cronobacter species.</title>
        <authorList>
            <person name="Kucerova E."/>
            <person name="Clifton S.W."/>
            <person name="Xia X.Q."/>
            <person name="Long F."/>
            <person name="Porwollik S."/>
            <person name="Fulton L."/>
            <person name="Fronick C."/>
            <person name="Minx P."/>
            <person name="Kyung K."/>
            <person name="Warren W."/>
            <person name="Fulton R."/>
            <person name="Feng D."/>
            <person name="Wollam A."/>
            <person name="Shah N."/>
            <person name="Bhonagiri V."/>
            <person name="Nash W.E."/>
            <person name="Hallsworth-Pepin K."/>
            <person name="Wilson R.K."/>
            <person name="McClelland M."/>
            <person name="Forsythe S.J."/>
        </authorList>
    </citation>
    <scope>NUCLEOTIDE SEQUENCE [LARGE SCALE GENOMIC DNA]</scope>
    <source>
        <strain>ATCC BAA-894</strain>
    </source>
</reference>
<dbReference type="EC" id="5.4.99.25" evidence="1"/>
<dbReference type="EMBL" id="CP000783">
    <property type="protein sequence ID" value="ABU78772.1"/>
    <property type="molecule type" value="Genomic_DNA"/>
</dbReference>
<dbReference type="RefSeq" id="WP_012125959.1">
    <property type="nucleotide sequence ID" value="NC_009778.1"/>
</dbReference>
<dbReference type="SMR" id="A7MQD9"/>
<dbReference type="KEGG" id="esa:ESA_03559"/>
<dbReference type="PATRIC" id="fig|290339.8.peg.3167"/>
<dbReference type="HOGENOM" id="CLU_032087_0_3_6"/>
<dbReference type="Proteomes" id="UP000000260">
    <property type="component" value="Chromosome"/>
</dbReference>
<dbReference type="GO" id="GO:0003723">
    <property type="term" value="F:RNA binding"/>
    <property type="evidence" value="ECO:0007669"/>
    <property type="project" value="InterPro"/>
</dbReference>
<dbReference type="GO" id="GO:0160148">
    <property type="term" value="F:tRNA pseudouridine(55) synthase activity"/>
    <property type="evidence" value="ECO:0007669"/>
    <property type="project" value="UniProtKB-EC"/>
</dbReference>
<dbReference type="GO" id="GO:1990481">
    <property type="term" value="P:mRNA pseudouridine synthesis"/>
    <property type="evidence" value="ECO:0007669"/>
    <property type="project" value="TreeGrafter"/>
</dbReference>
<dbReference type="GO" id="GO:0031119">
    <property type="term" value="P:tRNA pseudouridine synthesis"/>
    <property type="evidence" value="ECO:0007669"/>
    <property type="project" value="UniProtKB-UniRule"/>
</dbReference>
<dbReference type="CDD" id="cd02573">
    <property type="entry name" value="PseudoU_synth_EcTruB"/>
    <property type="match status" value="1"/>
</dbReference>
<dbReference type="CDD" id="cd21152">
    <property type="entry name" value="PUA_TruB_bacterial"/>
    <property type="match status" value="1"/>
</dbReference>
<dbReference type="FunFam" id="2.30.130.10:FF:000004">
    <property type="entry name" value="tRNA pseudouridine synthase B"/>
    <property type="match status" value="1"/>
</dbReference>
<dbReference type="FunFam" id="3.30.2350.10:FF:000003">
    <property type="entry name" value="tRNA pseudouridine synthase B"/>
    <property type="match status" value="1"/>
</dbReference>
<dbReference type="Gene3D" id="3.30.2350.10">
    <property type="entry name" value="Pseudouridine synthase"/>
    <property type="match status" value="1"/>
</dbReference>
<dbReference type="Gene3D" id="2.30.130.10">
    <property type="entry name" value="PUA domain"/>
    <property type="match status" value="1"/>
</dbReference>
<dbReference type="HAMAP" id="MF_01080">
    <property type="entry name" value="TruB_bact"/>
    <property type="match status" value="1"/>
</dbReference>
<dbReference type="InterPro" id="IPR020103">
    <property type="entry name" value="PsdUridine_synth_cat_dom_sf"/>
</dbReference>
<dbReference type="InterPro" id="IPR002501">
    <property type="entry name" value="PsdUridine_synth_N"/>
</dbReference>
<dbReference type="InterPro" id="IPR015947">
    <property type="entry name" value="PUA-like_sf"/>
</dbReference>
<dbReference type="InterPro" id="IPR036974">
    <property type="entry name" value="PUA_sf"/>
</dbReference>
<dbReference type="InterPro" id="IPR014780">
    <property type="entry name" value="tRNA_psdUridine_synth_TruB"/>
</dbReference>
<dbReference type="InterPro" id="IPR015240">
    <property type="entry name" value="tRNA_sdUridine_synth_fam1_C"/>
</dbReference>
<dbReference type="InterPro" id="IPR032819">
    <property type="entry name" value="TruB_C"/>
</dbReference>
<dbReference type="NCBIfam" id="TIGR00431">
    <property type="entry name" value="TruB"/>
    <property type="match status" value="1"/>
</dbReference>
<dbReference type="PANTHER" id="PTHR13767:SF2">
    <property type="entry name" value="PSEUDOURIDYLATE SYNTHASE TRUB1"/>
    <property type="match status" value="1"/>
</dbReference>
<dbReference type="PANTHER" id="PTHR13767">
    <property type="entry name" value="TRNA-PSEUDOURIDINE SYNTHASE"/>
    <property type="match status" value="1"/>
</dbReference>
<dbReference type="Pfam" id="PF09157">
    <property type="entry name" value="TruB-C_2"/>
    <property type="match status" value="1"/>
</dbReference>
<dbReference type="Pfam" id="PF16198">
    <property type="entry name" value="TruB_C_2"/>
    <property type="match status" value="1"/>
</dbReference>
<dbReference type="Pfam" id="PF01509">
    <property type="entry name" value="TruB_N"/>
    <property type="match status" value="1"/>
</dbReference>
<dbReference type="SUPFAM" id="SSF55120">
    <property type="entry name" value="Pseudouridine synthase"/>
    <property type="match status" value="1"/>
</dbReference>
<dbReference type="SUPFAM" id="SSF88697">
    <property type="entry name" value="PUA domain-like"/>
    <property type="match status" value="1"/>
</dbReference>
<comment type="function">
    <text evidence="1">Responsible for synthesis of pseudouridine from uracil-55 in the psi GC loop of transfer RNAs.</text>
</comment>
<comment type="catalytic activity">
    <reaction evidence="1">
        <text>uridine(55) in tRNA = pseudouridine(55) in tRNA</text>
        <dbReference type="Rhea" id="RHEA:42532"/>
        <dbReference type="Rhea" id="RHEA-COMP:10101"/>
        <dbReference type="Rhea" id="RHEA-COMP:10102"/>
        <dbReference type="ChEBI" id="CHEBI:65314"/>
        <dbReference type="ChEBI" id="CHEBI:65315"/>
        <dbReference type="EC" id="5.4.99.25"/>
    </reaction>
</comment>
<comment type="similarity">
    <text evidence="1">Belongs to the pseudouridine synthase TruB family. Type 1 subfamily.</text>
</comment>